<sequence length="509" mass="56886">MGPCCSKQTKALNNQPDKSKSKDVVLKENTSPFSQNTNNIMHVSHNQPPNINPPMLGGPGVTIFVALYDYEARISEDLSFKKGERLQIINTADGDWWYARSLITNSEGYIPSTYVAPEKSYEAEEWYFGDVKRAEAEKRLMVRGLPSGTFLIRKAETAVGNFSLSVRDGDSVKHYRVRKLDTGGYFITTRAPFNSLYELVQHYTKDADGLVCALTLPCPKDKPVTGGIAKDAWEIPRESLRLNRKLGAGQFGEVWAGVWNNTTQVAVKTLKPGTMSPASFLDEAGVMKKLRHKHLVQLYAICSDREPIYIVTEYMSGGSLLDYLSKGEGVNLQLPTLIDMAAQVASGMAFLEAQGYIHRDLAARNILVGENYICKVADFGLARLIEDDEYTAHEGAKFPIKWTAPEAALYNRFTIKSDVWSFGILMAEIVTKGRIPYPGMTNAQTIAEVEKGYRMPIMPGCPEPLYNIMLQTWNKDPENRPTFDYLQGVLEDYFVSTEQGYRDLGEANS</sequence>
<dbReference type="EC" id="2.7.10.2"/>
<dbReference type="EMBL" id="M25245">
    <property type="protein sequence ID" value="AAA29217.1"/>
    <property type="molecule type" value="mRNA"/>
</dbReference>
<dbReference type="PIR" id="A34094">
    <property type="entry name" value="TVHAST"/>
</dbReference>
<dbReference type="RefSeq" id="NP_001274717.1">
    <property type="nucleotide sequence ID" value="NM_001287788.1"/>
</dbReference>
<dbReference type="SMR" id="P17713"/>
<dbReference type="EnsemblMetazoa" id="NM_001287788.1">
    <property type="protein sequence ID" value="NP_001274717.1"/>
    <property type="gene ID" value="LOC100198593"/>
</dbReference>
<dbReference type="GeneID" id="100198593"/>
<dbReference type="KEGG" id="hmg:100198593"/>
<dbReference type="OMA" id="NYIAPVK"/>
<dbReference type="OrthoDB" id="4062651at2759"/>
<dbReference type="BRENDA" id="2.7.10.2">
    <property type="organism ID" value="2720"/>
</dbReference>
<dbReference type="Proteomes" id="UP000694840">
    <property type="component" value="Unplaced"/>
</dbReference>
<dbReference type="GO" id="GO:0005524">
    <property type="term" value="F:ATP binding"/>
    <property type="evidence" value="ECO:0007669"/>
    <property type="project" value="UniProtKB-KW"/>
</dbReference>
<dbReference type="GO" id="GO:0004715">
    <property type="term" value="F:non-membrane spanning protein tyrosine kinase activity"/>
    <property type="evidence" value="ECO:0007669"/>
    <property type="project" value="UniProtKB-EC"/>
</dbReference>
<dbReference type="CDD" id="cd05034">
    <property type="entry name" value="PTKc_Src_like"/>
    <property type="match status" value="1"/>
</dbReference>
<dbReference type="CDD" id="cd09933">
    <property type="entry name" value="SH2_Src_family"/>
    <property type="match status" value="1"/>
</dbReference>
<dbReference type="CDD" id="cd11845">
    <property type="entry name" value="SH3_Src_like"/>
    <property type="match status" value="1"/>
</dbReference>
<dbReference type="FunFam" id="1.10.510.10:FF:000553">
    <property type="entry name" value="Tyrosine-protein kinase"/>
    <property type="match status" value="1"/>
</dbReference>
<dbReference type="FunFam" id="3.30.200.20:FF:000036">
    <property type="entry name" value="Tyrosine-protein kinase"/>
    <property type="match status" value="1"/>
</dbReference>
<dbReference type="FunFam" id="3.30.505.10:FF:000044">
    <property type="entry name" value="Tyrosine-protein kinase"/>
    <property type="match status" value="1"/>
</dbReference>
<dbReference type="Gene3D" id="3.30.200.20">
    <property type="entry name" value="Phosphorylase Kinase, domain 1"/>
    <property type="match status" value="1"/>
</dbReference>
<dbReference type="Gene3D" id="3.30.505.10">
    <property type="entry name" value="SH2 domain"/>
    <property type="match status" value="1"/>
</dbReference>
<dbReference type="Gene3D" id="2.30.30.40">
    <property type="entry name" value="SH3 Domains"/>
    <property type="match status" value="1"/>
</dbReference>
<dbReference type="Gene3D" id="1.10.510.10">
    <property type="entry name" value="Transferase(Phosphotransferase) domain 1"/>
    <property type="match status" value="1"/>
</dbReference>
<dbReference type="InterPro" id="IPR011009">
    <property type="entry name" value="Kinase-like_dom_sf"/>
</dbReference>
<dbReference type="InterPro" id="IPR050198">
    <property type="entry name" value="Non-receptor_tyrosine_kinases"/>
</dbReference>
<dbReference type="InterPro" id="IPR000719">
    <property type="entry name" value="Prot_kinase_dom"/>
</dbReference>
<dbReference type="InterPro" id="IPR017441">
    <property type="entry name" value="Protein_kinase_ATP_BS"/>
</dbReference>
<dbReference type="InterPro" id="IPR001245">
    <property type="entry name" value="Ser-Thr/Tyr_kinase_cat_dom"/>
</dbReference>
<dbReference type="InterPro" id="IPR000980">
    <property type="entry name" value="SH2"/>
</dbReference>
<dbReference type="InterPro" id="IPR036860">
    <property type="entry name" value="SH2_dom_sf"/>
</dbReference>
<dbReference type="InterPro" id="IPR036028">
    <property type="entry name" value="SH3-like_dom_sf"/>
</dbReference>
<dbReference type="InterPro" id="IPR001452">
    <property type="entry name" value="SH3_domain"/>
</dbReference>
<dbReference type="InterPro" id="IPR008266">
    <property type="entry name" value="Tyr_kinase_AS"/>
</dbReference>
<dbReference type="InterPro" id="IPR020635">
    <property type="entry name" value="Tyr_kinase_cat_dom"/>
</dbReference>
<dbReference type="PANTHER" id="PTHR24418">
    <property type="entry name" value="TYROSINE-PROTEIN KINASE"/>
    <property type="match status" value="1"/>
</dbReference>
<dbReference type="Pfam" id="PF07714">
    <property type="entry name" value="PK_Tyr_Ser-Thr"/>
    <property type="match status" value="1"/>
</dbReference>
<dbReference type="Pfam" id="PF00017">
    <property type="entry name" value="SH2"/>
    <property type="match status" value="1"/>
</dbReference>
<dbReference type="Pfam" id="PF00018">
    <property type="entry name" value="SH3_1"/>
    <property type="match status" value="1"/>
</dbReference>
<dbReference type="PRINTS" id="PR00401">
    <property type="entry name" value="SH2DOMAIN"/>
</dbReference>
<dbReference type="PRINTS" id="PR00452">
    <property type="entry name" value="SH3DOMAIN"/>
</dbReference>
<dbReference type="PRINTS" id="PR00109">
    <property type="entry name" value="TYRKINASE"/>
</dbReference>
<dbReference type="SMART" id="SM00252">
    <property type="entry name" value="SH2"/>
    <property type="match status" value="1"/>
</dbReference>
<dbReference type="SMART" id="SM00326">
    <property type="entry name" value="SH3"/>
    <property type="match status" value="1"/>
</dbReference>
<dbReference type="SMART" id="SM00219">
    <property type="entry name" value="TyrKc"/>
    <property type="match status" value="1"/>
</dbReference>
<dbReference type="SUPFAM" id="SSF56112">
    <property type="entry name" value="Protein kinase-like (PK-like)"/>
    <property type="match status" value="1"/>
</dbReference>
<dbReference type="SUPFAM" id="SSF55550">
    <property type="entry name" value="SH2 domain"/>
    <property type="match status" value="1"/>
</dbReference>
<dbReference type="SUPFAM" id="SSF50044">
    <property type="entry name" value="SH3-domain"/>
    <property type="match status" value="1"/>
</dbReference>
<dbReference type="PROSITE" id="PS00107">
    <property type="entry name" value="PROTEIN_KINASE_ATP"/>
    <property type="match status" value="1"/>
</dbReference>
<dbReference type="PROSITE" id="PS50011">
    <property type="entry name" value="PROTEIN_KINASE_DOM"/>
    <property type="match status" value="1"/>
</dbReference>
<dbReference type="PROSITE" id="PS00109">
    <property type="entry name" value="PROTEIN_KINASE_TYR"/>
    <property type="match status" value="1"/>
</dbReference>
<dbReference type="PROSITE" id="PS50001">
    <property type="entry name" value="SH2"/>
    <property type="match status" value="1"/>
</dbReference>
<dbReference type="PROSITE" id="PS50002">
    <property type="entry name" value="SH3"/>
    <property type="match status" value="1"/>
</dbReference>
<reference key="1">
    <citation type="journal article" date="1989" name="Mol. Cell. Biol.">
        <title>Structure and expression of STK, a src-related gene in the simple metazoan Hydra attenuata.</title>
        <authorList>
            <person name="Bosch T.C.G."/>
            <person name="Unger T.F."/>
            <person name="Fisher D.A."/>
            <person name="Steele R.E."/>
        </authorList>
    </citation>
    <scope>NUCLEOTIDE SEQUENCE [MRNA]</scope>
</reference>
<name>STK_HYDVU</name>
<accession>P17713</accession>
<proteinExistence type="evidence at transcript level"/>
<protein>
    <recommendedName>
        <fullName>Tyrosine-protein kinase STK</fullName>
        <ecNumber>2.7.10.2</ecNumber>
    </recommendedName>
    <alternativeName>
        <fullName>P57-STK</fullName>
    </alternativeName>
</protein>
<keyword id="KW-0067">ATP-binding</keyword>
<keyword id="KW-0418">Kinase</keyword>
<keyword id="KW-0449">Lipoprotein</keyword>
<keyword id="KW-0519">Myristate</keyword>
<keyword id="KW-0547">Nucleotide-binding</keyword>
<keyword id="KW-0597">Phosphoprotein</keyword>
<keyword id="KW-0656">Proto-oncogene</keyword>
<keyword id="KW-1185">Reference proteome</keyword>
<keyword id="KW-0727">SH2 domain</keyword>
<keyword id="KW-0728">SH3 domain</keyword>
<keyword id="KW-0808">Transferase</keyword>
<keyword id="KW-0829">Tyrosine-protein kinase</keyword>
<comment type="catalytic activity">
    <reaction evidence="5">
        <text>L-tyrosyl-[protein] + ATP = O-phospho-L-tyrosyl-[protein] + ADP + H(+)</text>
        <dbReference type="Rhea" id="RHEA:10596"/>
        <dbReference type="Rhea" id="RHEA-COMP:10136"/>
        <dbReference type="Rhea" id="RHEA-COMP:20101"/>
        <dbReference type="ChEBI" id="CHEBI:15378"/>
        <dbReference type="ChEBI" id="CHEBI:30616"/>
        <dbReference type="ChEBI" id="CHEBI:46858"/>
        <dbReference type="ChEBI" id="CHEBI:61978"/>
        <dbReference type="ChEBI" id="CHEBI:456216"/>
        <dbReference type="EC" id="2.7.10.2"/>
    </reaction>
</comment>
<comment type="similarity">
    <text evidence="2">Belongs to the protein kinase superfamily. Tyr protein kinase family. SRC subfamily.</text>
</comment>
<evidence type="ECO:0000250" key="1"/>
<evidence type="ECO:0000255" key="2">
    <source>
        <dbReference type="PROSITE-ProRule" id="PRU00159"/>
    </source>
</evidence>
<evidence type="ECO:0000255" key="3">
    <source>
        <dbReference type="PROSITE-ProRule" id="PRU00191"/>
    </source>
</evidence>
<evidence type="ECO:0000255" key="4">
    <source>
        <dbReference type="PROSITE-ProRule" id="PRU00192"/>
    </source>
</evidence>
<evidence type="ECO:0000255" key="5">
    <source>
        <dbReference type="PROSITE-ProRule" id="PRU10028"/>
    </source>
</evidence>
<evidence type="ECO:0000256" key="6">
    <source>
        <dbReference type="SAM" id="MobiDB-lite"/>
    </source>
</evidence>
<feature type="initiator methionine" description="Removed" evidence="1">
    <location>
        <position position="1"/>
    </location>
</feature>
<feature type="chain" id="PRO_0000088162" description="Tyrosine-protein kinase STK">
    <location>
        <begin position="2"/>
        <end position="509"/>
    </location>
</feature>
<feature type="domain" description="SH3" evidence="4">
    <location>
        <begin position="59"/>
        <end position="120"/>
    </location>
</feature>
<feature type="domain" description="SH2" evidence="3">
    <location>
        <begin position="126"/>
        <end position="218"/>
    </location>
</feature>
<feature type="domain" description="Protein kinase" evidence="2">
    <location>
        <begin position="240"/>
        <end position="495"/>
    </location>
</feature>
<feature type="region of interest" description="Disordered" evidence="6">
    <location>
        <begin position="1"/>
        <end position="23"/>
    </location>
</feature>
<feature type="compositionally biased region" description="Polar residues" evidence="6">
    <location>
        <begin position="1"/>
        <end position="16"/>
    </location>
</feature>
<feature type="active site" description="Proton acceptor" evidence="2 5">
    <location>
        <position position="360"/>
    </location>
</feature>
<feature type="binding site" evidence="2">
    <location>
        <begin position="246"/>
        <end position="254"/>
    </location>
    <ligand>
        <name>ATP</name>
        <dbReference type="ChEBI" id="CHEBI:30616"/>
    </ligand>
</feature>
<feature type="binding site" evidence="2">
    <location>
        <position position="268"/>
    </location>
    <ligand>
        <name>ATP</name>
        <dbReference type="ChEBI" id="CHEBI:30616"/>
    </ligand>
</feature>
<feature type="modified residue" description="Phosphotyrosine; by autocatalysis" evidence="1">
    <location>
        <position position="390"/>
    </location>
</feature>
<feature type="lipid moiety-binding region" description="N-myristoyl glycine" evidence="1">
    <location>
        <position position="2"/>
    </location>
</feature>
<organism>
    <name type="scientific">Hydra vulgaris</name>
    <name type="common">Hydra</name>
    <name type="synonym">Hydra attenuata</name>
    <dbReference type="NCBI Taxonomy" id="6087"/>
    <lineage>
        <taxon>Eukaryota</taxon>
        <taxon>Metazoa</taxon>
        <taxon>Cnidaria</taxon>
        <taxon>Hydrozoa</taxon>
        <taxon>Hydroidolina</taxon>
        <taxon>Anthoathecata</taxon>
        <taxon>Aplanulata</taxon>
        <taxon>Hydridae</taxon>
        <taxon>Hydra</taxon>
    </lineage>
</organism>
<gene>
    <name type="primary">STK</name>
</gene>